<name>SYY_STAES</name>
<keyword id="KW-0030">Aminoacyl-tRNA synthetase</keyword>
<keyword id="KW-0067">ATP-binding</keyword>
<keyword id="KW-0963">Cytoplasm</keyword>
<keyword id="KW-0436">Ligase</keyword>
<keyword id="KW-0547">Nucleotide-binding</keyword>
<keyword id="KW-0648">Protein biosynthesis</keyword>
<keyword id="KW-0694">RNA-binding</keyword>
<protein>
    <recommendedName>
        <fullName evidence="1">Tyrosine--tRNA ligase</fullName>
        <ecNumber evidence="1">6.1.1.1</ecNumber>
    </recommendedName>
    <alternativeName>
        <fullName evidence="1">Tyrosyl-tRNA synthetase</fullName>
        <shortName evidence="1">TyrRS</shortName>
    </alternativeName>
</protein>
<feature type="chain" id="PRO_0000234780" description="Tyrosine--tRNA ligase">
    <location>
        <begin position="1"/>
        <end position="421"/>
    </location>
</feature>
<feature type="domain" description="S4 RNA-binding" evidence="1">
    <location>
        <begin position="353"/>
        <end position="420"/>
    </location>
</feature>
<feature type="short sequence motif" description="'HIGH' region">
    <location>
        <begin position="41"/>
        <end position="50"/>
    </location>
</feature>
<feature type="short sequence motif" description="'KMSKS' region">
    <location>
        <begin position="231"/>
        <end position="235"/>
    </location>
</feature>
<feature type="binding site" evidence="1">
    <location>
        <position position="36"/>
    </location>
    <ligand>
        <name>L-tyrosine</name>
        <dbReference type="ChEBI" id="CHEBI:58315"/>
    </ligand>
</feature>
<feature type="binding site" evidence="1">
    <location>
        <position position="170"/>
    </location>
    <ligand>
        <name>L-tyrosine</name>
        <dbReference type="ChEBI" id="CHEBI:58315"/>
    </ligand>
</feature>
<feature type="binding site" evidence="1">
    <location>
        <position position="174"/>
    </location>
    <ligand>
        <name>L-tyrosine</name>
        <dbReference type="ChEBI" id="CHEBI:58315"/>
    </ligand>
</feature>
<feature type="binding site" evidence="1">
    <location>
        <position position="234"/>
    </location>
    <ligand>
        <name>ATP</name>
        <dbReference type="ChEBI" id="CHEBI:30616"/>
    </ligand>
</feature>
<accession>Q8CS48</accession>
<gene>
    <name evidence="1" type="primary">tyrS</name>
    <name type="ordered locus">SE_1406</name>
</gene>
<sequence>MANALIEDLKWRGLIYQQTDEEGIEELLNKEQVTLYCGADPTADSLHIGHLLPFLTLRRFQEHGHRPIVLIGGGTGMIGDPSGKSEERVLQTESQVEANVKGLSNQMHRLFEFGSDKGAKLVNNKDWLGQISLISFLRDYGKHVGVNYMLGKDSIQTRLEHGISYTEFTYTILQAIDFGYLNRELNCKIQVGGSDQWGNITSGIELMRRMYGQTEAYGLTIPLVTKSDGKKFGKSESGAVWLDPEKTSPYEFYQFWINQSDEDVIKFLKYFTFLEKEEINRLEQSKNEAPHLREAQKALAENVTKFIHGEAALKDAIRISKALFSGDLKSLSAKELKEGFKDVPQVTLSTKTTNIVEALIETGIASSKRQAREDVNNGAIYINGERQQSVDYELSSKDLIEDEITIIRRGKKKYFMVNYQS</sequence>
<dbReference type="EC" id="6.1.1.1" evidence="1"/>
<dbReference type="EMBL" id="AE015929">
    <property type="protein sequence ID" value="AAO05005.1"/>
    <property type="molecule type" value="Genomic_DNA"/>
</dbReference>
<dbReference type="RefSeq" id="NP_764961.1">
    <property type="nucleotide sequence ID" value="NC_004461.1"/>
</dbReference>
<dbReference type="RefSeq" id="WP_001830858.1">
    <property type="nucleotide sequence ID" value="NZ_WBME01000009.1"/>
</dbReference>
<dbReference type="SMR" id="Q8CS48"/>
<dbReference type="GeneID" id="50018483"/>
<dbReference type="KEGG" id="sep:SE_1406"/>
<dbReference type="PATRIC" id="fig|176280.10.peg.1373"/>
<dbReference type="eggNOG" id="COG0162">
    <property type="taxonomic scope" value="Bacteria"/>
</dbReference>
<dbReference type="HOGENOM" id="CLU_024003_0_3_9"/>
<dbReference type="OrthoDB" id="9804243at2"/>
<dbReference type="Proteomes" id="UP000001411">
    <property type="component" value="Chromosome"/>
</dbReference>
<dbReference type="GO" id="GO:0005829">
    <property type="term" value="C:cytosol"/>
    <property type="evidence" value="ECO:0007669"/>
    <property type="project" value="TreeGrafter"/>
</dbReference>
<dbReference type="GO" id="GO:0005524">
    <property type="term" value="F:ATP binding"/>
    <property type="evidence" value="ECO:0007669"/>
    <property type="project" value="UniProtKB-UniRule"/>
</dbReference>
<dbReference type="GO" id="GO:0003723">
    <property type="term" value="F:RNA binding"/>
    <property type="evidence" value="ECO:0007669"/>
    <property type="project" value="UniProtKB-KW"/>
</dbReference>
<dbReference type="GO" id="GO:0004831">
    <property type="term" value="F:tyrosine-tRNA ligase activity"/>
    <property type="evidence" value="ECO:0007669"/>
    <property type="project" value="UniProtKB-UniRule"/>
</dbReference>
<dbReference type="GO" id="GO:0006437">
    <property type="term" value="P:tyrosyl-tRNA aminoacylation"/>
    <property type="evidence" value="ECO:0007669"/>
    <property type="project" value="UniProtKB-UniRule"/>
</dbReference>
<dbReference type="CDD" id="cd00165">
    <property type="entry name" value="S4"/>
    <property type="match status" value="1"/>
</dbReference>
<dbReference type="CDD" id="cd00395">
    <property type="entry name" value="Tyr_Trp_RS_core"/>
    <property type="match status" value="1"/>
</dbReference>
<dbReference type="FunFam" id="1.10.240.10:FF:000001">
    <property type="entry name" value="Tyrosine--tRNA ligase"/>
    <property type="match status" value="1"/>
</dbReference>
<dbReference type="FunFam" id="3.40.50.620:FF:000008">
    <property type="entry name" value="Tyrosine--tRNA ligase"/>
    <property type="match status" value="1"/>
</dbReference>
<dbReference type="Gene3D" id="3.40.50.620">
    <property type="entry name" value="HUPs"/>
    <property type="match status" value="1"/>
</dbReference>
<dbReference type="Gene3D" id="3.10.290.10">
    <property type="entry name" value="RNA-binding S4 domain"/>
    <property type="match status" value="1"/>
</dbReference>
<dbReference type="Gene3D" id="1.10.240.10">
    <property type="entry name" value="Tyrosyl-Transfer RNA Synthetase"/>
    <property type="match status" value="1"/>
</dbReference>
<dbReference type="HAMAP" id="MF_02006">
    <property type="entry name" value="Tyr_tRNA_synth_type1"/>
    <property type="match status" value="1"/>
</dbReference>
<dbReference type="InterPro" id="IPR001412">
    <property type="entry name" value="aa-tRNA-synth_I_CS"/>
</dbReference>
<dbReference type="InterPro" id="IPR002305">
    <property type="entry name" value="aa-tRNA-synth_Ic"/>
</dbReference>
<dbReference type="InterPro" id="IPR014729">
    <property type="entry name" value="Rossmann-like_a/b/a_fold"/>
</dbReference>
<dbReference type="InterPro" id="IPR002942">
    <property type="entry name" value="S4_RNA-bd"/>
</dbReference>
<dbReference type="InterPro" id="IPR036986">
    <property type="entry name" value="S4_RNA-bd_sf"/>
</dbReference>
<dbReference type="InterPro" id="IPR054608">
    <property type="entry name" value="SYY-like_C"/>
</dbReference>
<dbReference type="InterPro" id="IPR002307">
    <property type="entry name" value="Tyr-tRNA-ligase"/>
</dbReference>
<dbReference type="InterPro" id="IPR024088">
    <property type="entry name" value="Tyr-tRNA-ligase_bac-type"/>
</dbReference>
<dbReference type="InterPro" id="IPR024107">
    <property type="entry name" value="Tyr-tRNA-ligase_bac_1"/>
</dbReference>
<dbReference type="NCBIfam" id="TIGR00234">
    <property type="entry name" value="tyrS"/>
    <property type="match status" value="1"/>
</dbReference>
<dbReference type="PANTHER" id="PTHR11766:SF0">
    <property type="entry name" value="TYROSINE--TRNA LIGASE, MITOCHONDRIAL"/>
    <property type="match status" value="1"/>
</dbReference>
<dbReference type="PANTHER" id="PTHR11766">
    <property type="entry name" value="TYROSYL-TRNA SYNTHETASE"/>
    <property type="match status" value="1"/>
</dbReference>
<dbReference type="Pfam" id="PF22421">
    <property type="entry name" value="SYY_C-terminal"/>
    <property type="match status" value="1"/>
</dbReference>
<dbReference type="Pfam" id="PF00579">
    <property type="entry name" value="tRNA-synt_1b"/>
    <property type="match status" value="1"/>
</dbReference>
<dbReference type="PRINTS" id="PR01040">
    <property type="entry name" value="TRNASYNTHTYR"/>
</dbReference>
<dbReference type="SMART" id="SM00363">
    <property type="entry name" value="S4"/>
    <property type="match status" value="1"/>
</dbReference>
<dbReference type="SUPFAM" id="SSF55174">
    <property type="entry name" value="Alpha-L RNA-binding motif"/>
    <property type="match status" value="1"/>
</dbReference>
<dbReference type="SUPFAM" id="SSF52374">
    <property type="entry name" value="Nucleotidylyl transferase"/>
    <property type="match status" value="1"/>
</dbReference>
<dbReference type="PROSITE" id="PS00178">
    <property type="entry name" value="AA_TRNA_LIGASE_I"/>
    <property type="match status" value="1"/>
</dbReference>
<dbReference type="PROSITE" id="PS50889">
    <property type="entry name" value="S4"/>
    <property type="match status" value="1"/>
</dbReference>
<reference key="1">
    <citation type="journal article" date="2003" name="Mol. Microbiol.">
        <title>Genome-based analysis of virulence genes in a non-biofilm-forming Staphylococcus epidermidis strain (ATCC 12228).</title>
        <authorList>
            <person name="Zhang Y.-Q."/>
            <person name="Ren S.-X."/>
            <person name="Li H.-L."/>
            <person name="Wang Y.-X."/>
            <person name="Fu G."/>
            <person name="Yang J."/>
            <person name="Qin Z.-Q."/>
            <person name="Miao Y.-G."/>
            <person name="Wang W.-Y."/>
            <person name="Chen R.-S."/>
            <person name="Shen Y."/>
            <person name="Chen Z."/>
            <person name="Yuan Z.-H."/>
            <person name="Zhao G.-P."/>
            <person name="Qu D."/>
            <person name="Danchin A."/>
            <person name="Wen Y.-M."/>
        </authorList>
    </citation>
    <scope>NUCLEOTIDE SEQUENCE [LARGE SCALE GENOMIC DNA]</scope>
    <source>
        <strain>ATCC 12228 / FDA PCI 1200</strain>
    </source>
</reference>
<evidence type="ECO:0000255" key="1">
    <source>
        <dbReference type="HAMAP-Rule" id="MF_02006"/>
    </source>
</evidence>
<comment type="function">
    <text evidence="1">Catalyzes the attachment of tyrosine to tRNA(Tyr) in a two-step reaction: tyrosine is first activated by ATP to form Tyr-AMP and then transferred to the acceptor end of tRNA(Tyr).</text>
</comment>
<comment type="catalytic activity">
    <reaction evidence="1">
        <text>tRNA(Tyr) + L-tyrosine + ATP = L-tyrosyl-tRNA(Tyr) + AMP + diphosphate + H(+)</text>
        <dbReference type="Rhea" id="RHEA:10220"/>
        <dbReference type="Rhea" id="RHEA-COMP:9706"/>
        <dbReference type="Rhea" id="RHEA-COMP:9707"/>
        <dbReference type="ChEBI" id="CHEBI:15378"/>
        <dbReference type="ChEBI" id="CHEBI:30616"/>
        <dbReference type="ChEBI" id="CHEBI:33019"/>
        <dbReference type="ChEBI" id="CHEBI:58315"/>
        <dbReference type="ChEBI" id="CHEBI:78442"/>
        <dbReference type="ChEBI" id="CHEBI:78536"/>
        <dbReference type="ChEBI" id="CHEBI:456215"/>
        <dbReference type="EC" id="6.1.1.1"/>
    </reaction>
</comment>
<comment type="subunit">
    <text evidence="1">Homodimer.</text>
</comment>
<comment type="subcellular location">
    <subcellularLocation>
        <location evidence="1">Cytoplasm</location>
    </subcellularLocation>
</comment>
<comment type="similarity">
    <text evidence="1">Belongs to the class-I aminoacyl-tRNA synthetase family. TyrS type 1 subfamily.</text>
</comment>
<organism>
    <name type="scientific">Staphylococcus epidermidis (strain ATCC 12228 / FDA PCI 1200)</name>
    <dbReference type="NCBI Taxonomy" id="176280"/>
    <lineage>
        <taxon>Bacteria</taxon>
        <taxon>Bacillati</taxon>
        <taxon>Bacillota</taxon>
        <taxon>Bacilli</taxon>
        <taxon>Bacillales</taxon>
        <taxon>Staphylococcaceae</taxon>
        <taxon>Staphylococcus</taxon>
    </lineage>
</organism>
<proteinExistence type="inferred from homology"/>